<name>RM35_PONAB</name>
<dbReference type="EMBL" id="CR859258">
    <property type="protein sequence ID" value="CAH91438.1"/>
    <property type="molecule type" value="mRNA"/>
</dbReference>
<dbReference type="EMBL" id="CR859356">
    <property type="protein sequence ID" value="CAH91530.1"/>
    <property type="molecule type" value="mRNA"/>
</dbReference>
<dbReference type="RefSeq" id="NP_001125898.1">
    <property type="nucleotide sequence ID" value="NM_001132426.2"/>
</dbReference>
<dbReference type="SMR" id="Q5R9N0"/>
<dbReference type="FunCoup" id="Q5R9N0">
    <property type="interactions" value="1085"/>
</dbReference>
<dbReference type="STRING" id="9601.ENSPPYP00000013618"/>
<dbReference type="Ensembl" id="ENSPPYT00000037238.1">
    <property type="protein sequence ID" value="ENSPPYP00000044291.1"/>
    <property type="gene ID" value="ENSPPYG00000032949.1"/>
</dbReference>
<dbReference type="GeneID" id="100172831"/>
<dbReference type="KEGG" id="pon:100172831"/>
<dbReference type="CTD" id="51318"/>
<dbReference type="eggNOG" id="KOG4316">
    <property type="taxonomic scope" value="Eukaryota"/>
</dbReference>
<dbReference type="GeneTree" id="ENSGT00390000007547"/>
<dbReference type="InParanoid" id="Q5R9N0"/>
<dbReference type="OMA" id="TYCSTRK"/>
<dbReference type="OrthoDB" id="5847109at2759"/>
<dbReference type="Proteomes" id="UP000001595">
    <property type="component" value="Chromosome 2A"/>
</dbReference>
<dbReference type="GO" id="GO:0005762">
    <property type="term" value="C:mitochondrial large ribosomal subunit"/>
    <property type="evidence" value="ECO:0007669"/>
    <property type="project" value="Ensembl"/>
</dbReference>
<dbReference type="GO" id="GO:0003735">
    <property type="term" value="F:structural constituent of ribosome"/>
    <property type="evidence" value="ECO:0007669"/>
    <property type="project" value="InterPro"/>
</dbReference>
<dbReference type="GO" id="GO:0006412">
    <property type="term" value="P:translation"/>
    <property type="evidence" value="ECO:0007669"/>
    <property type="project" value="InterPro"/>
</dbReference>
<dbReference type="InterPro" id="IPR021137">
    <property type="entry name" value="Ribosomal_bL35-like"/>
</dbReference>
<dbReference type="InterPro" id="IPR037229">
    <property type="entry name" value="Ribosomal_bL35_sf"/>
</dbReference>
<dbReference type="InterPro" id="IPR019338">
    <property type="entry name" value="Ribosomal_bL35m"/>
</dbReference>
<dbReference type="PANTHER" id="PTHR15909">
    <property type="entry name" value="39S RIBOSOMAL PROTEIN L35, MITOCHONDRIAL"/>
    <property type="match status" value="1"/>
</dbReference>
<dbReference type="PANTHER" id="PTHR15909:SF0">
    <property type="entry name" value="LARGE RIBOSOMAL SUBUNIT PROTEIN BL35M"/>
    <property type="match status" value="1"/>
</dbReference>
<dbReference type="Pfam" id="PF01632">
    <property type="entry name" value="Ribosomal_L35p"/>
    <property type="match status" value="1"/>
</dbReference>
<dbReference type="SUPFAM" id="SSF143034">
    <property type="entry name" value="L35p-like"/>
    <property type="match status" value="1"/>
</dbReference>
<organism>
    <name type="scientific">Pongo abelii</name>
    <name type="common">Sumatran orangutan</name>
    <name type="synonym">Pongo pygmaeus abelii</name>
    <dbReference type="NCBI Taxonomy" id="9601"/>
    <lineage>
        <taxon>Eukaryota</taxon>
        <taxon>Metazoa</taxon>
        <taxon>Chordata</taxon>
        <taxon>Craniata</taxon>
        <taxon>Vertebrata</taxon>
        <taxon>Euteleostomi</taxon>
        <taxon>Mammalia</taxon>
        <taxon>Eutheria</taxon>
        <taxon>Euarchontoglires</taxon>
        <taxon>Primates</taxon>
        <taxon>Haplorrhini</taxon>
        <taxon>Catarrhini</taxon>
        <taxon>Hominidae</taxon>
        <taxon>Pongo</taxon>
    </lineage>
</organism>
<accession>Q5R9N0</accession>
<accession>Q5R9X2</accession>
<evidence type="ECO:0000250" key="1"/>
<evidence type="ECO:0000255" key="2"/>
<evidence type="ECO:0000305" key="3"/>
<sequence>MAASAFAGAVRAASGILRPLNILASSTYRNCVKNASLISALSTGRFSHIQTPVVSSTPRLPTSERNLTCGHTSVILNRVAPVLPSVLKLPVRSLTYFSARKGKRKTVKAVIYRFLRLHCGLWVRRKAGYKKKLWKKTPARKKRLREFVFCNKTQSKLLDKMTTSFWKRRNWYVDDPYQKYHDRTNLKV</sequence>
<reference key="1">
    <citation type="submission" date="2004-11" db="EMBL/GenBank/DDBJ databases">
        <authorList>
            <consortium name="The German cDNA consortium"/>
        </authorList>
    </citation>
    <scope>NUCLEOTIDE SEQUENCE [LARGE SCALE MRNA]</scope>
    <source>
        <tissue>Brain cortex</tissue>
    </source>
</reference>
<keyword id="KW-0496">Mitochondrion</keyword>
<keyword id="KW-1185">Reference proteome</keyword>
<keyword id="KW-0687">Ribonucleoprotein</keyword>
<keyword id="KW-0689">Ribosomal protein</keyword>
<keyword id="KW-0809">Transit peptide</keyword>
<gene>
    <name type="primary">MRPL35</name>
</gene>
<proteinExistence type="evidence at transcript level"/>
<feature type="transit peptide" description="Mitochondrion" evidence="2">
    <location>
        <begin position="1"/>
        <end status="unknown"/>
    </location>
</feature>
<feature type="chain" id="PRO_0000273553" description="Large ribosomal subunit protein bL35m">
    <location>
        <begin status="unknown"/>
        <end position="188"/>
    </location>
</feature>
<feature type="sequence conflict" description="In Ref. 1; CAH91530." evidence="3" ref="1">
    <original>L</original>
    <variation>P</variation>
    <location>
        <position position="17"/>
    </location>
</feature>
<feature type="sequence conflict" description="In Ref. 1; CAH91438." evidence="3" ref="1">
    <original>S</original>
    <variation>P</variation>
    <location>
        <position position="55"/>
    </location>
</feature>
<feature type="sequence conflict" description="In Ref. 1; CAH91530." evidence="3" ref="1">
    <original>S</original>
    <variation>G</variation>
    <location>
        <position position="85"/>
    </location>
</feature>
<feature type="sequence conflict" description="In Ref. 1; CAH91438." evidence="3" ref="1">
    <original>F</original>
    <variation>Y</variation>
    <location>
        <position position="97"/>
    </location>
</feature>
<protein>
    <recommendedName>
        <fullName evidence="3">Large ribosomal subunit protein bL35m</fullName>
    </recommendedName>
    <alternativeName>
        <fullName>39S ribosomal protein L35, mitochondrial</fullName>
        <shortName>L35mt</shortName>
        <shortName>MRP-L35</shortName>
    </alternativeName>
</protein>
<comment type="subcellular location">
    <subcellularLocation>
        <location evidence="1">Mitochondrion</location>
    </subcellularLocation>
</comment>
<comment type="similarity">
    <text evidence="3">Belongs to the bacterial ribosomal protein bL35 family.</text>
</comment>